<name>BCHL_PELPB</name>
<keyword id="KW-0004">4Fe-4S</keyword>
<keyword id="KW-0067">ATP-binding</keyword>
<keyword id="KW-0077">Bacteriochlorophyll biosynthesis</keyword>
<keyword id="KW-0149">Chlorophyll biosynthesis</keyword>
<keyword id="KW-0408">Iron</keyword>
<keyword id="KW-0411">Iron-sulfur</keyword>
<keyword id="KW-0460">Magnesium</keyword>
<keyword id="KW-0479">Metal-binding</keyword>
<keyword id="KW-0547">Nucleotide-binding</keyword>
<keyword id="KW-0560">Oxidoreductase</keyword>
<keyword id="KW-0602">Photosynthesis</keyword>
<keyword id="KW-1185">Reference proteome</keyword>
<protein>
    <recommendedName>
        <fullName evidence="1">Light-independent protochlorophyllide reductase iron-sulfur ATP-binding protein</fullName>
        <shortName evidence="1">DPOR subunit L</shortName>
        <shortName evidence="1">LI-POR subunit L</shortName>
        <ecNumber evidence="1">1.3.7.7</ecNumber>
    </recommendedName>
</protein>
<accession>B4SC79</accession>
<proteinExistence type="inferred from homology"/>
<organism>
    <name type="scientific">Pelodictyon phaeoclathratiforme (strain DSM 5477 / BU-1)</name>
    <dbReference type="NCBI Taxonomy" id="324925"/>
    <lineage>
        <taxon>Bacteria</taxon>
        <taxon>Pseudomonadati</taxon>
        <taxon>Chlorobiota</taxon>
        <taxon>Chlorobiia</taxon>
        <taxon>Chlorobiales</taxon>
        <taxon>Chlorobiaceae</taxon>
        <taxon>Chlorobium/Pelodictyon group</taxon>
        <taxon>Pelodictyon</taxon>
    </lineage>
</organism>
<gene>
    <name evidence="1" type="primary">bchL</name>
    <name type="ordered locus">Ppha_0326</name>
</gene>
<sequence>MSLVLAVYGKGGIGKSTTSANISAALALKGAKVLQIGCDPKHDSTFPITGKLQKTVIEALEEVDFHHEELSAEDIIETGFAGIDCLEAGGPPAGSGCGGYVVGESVALLQELGLYDKYDVILFDVLGDVVCGGFSAPLNYADYAIIIATNDFDSIFAANRLCMAIQQKSVRYKVKLAGIVANRVDYVTGGGTNMLDQFAEKVGTKLLAKVPYHELIRKSRFAGKTMYAMEDTPDKEECLKPYNEIADFLIQESPIASVPVPIGDREIFKMVNGWQ</sequence>
<reference key="1">
    <citation type="submission" date="2008-06" db="EMBL/GenBank/DDBJ databases">
        <title>Complete sequence of Pelodictyon phaeoclathratiforme BU-1.</title>
        <authorList>
            <consortium name="US DOE Joint Genome Institute"/>
            <person name="Lucas S."/>
            <person name="Copeland A."/>
            <person name="Lapidus A."/>
            <person name="Glavina del Rio T."/>
            <person name="Dalin E."/>
            <person name="Tice H."/>
            <person name="Bruce D."/>
            <person name="Goodwin L."/>
            <person name="Pitluck S."/>
            <person name="Schmutz J."/>
            <person name="Larimer F."/>
            <person name="Land M."/>
            <person name="Hauser L."/>
            <person name="Kyrpides N."/>
            <person name="Mikhailova N."/>
            <person name="Liu Z."/>
            <person name="Li T."/>
            <person name="Zhao F."/>
            <person name="Overmann J."/>
            <person name="Bryant D.A."/>
            <person name="Richardson P."/>
        </authorList>
    </citation>
    <scope>NUCLEOTIDE SEQUENCE [LARGE SCALE GENOMIC DNA]</scope>
    <source>
        <strain>DSM 5477 / BU-1</strain>
    </source>
</reference>
<dbReference type="EC" id="1.3.7.7" evidence="1"/>
<dbReference type="EMBL" id="CP001110">
    <property type="protein sequence ID" value="ACF42659.1"/>
    <property type="molecule type" value="Genomic_DNA"/>
</dbReference>
<dbReference type="RefSeq" id="WP_012507154.1">
    <property type="nucleotide sequence ID" value="NC_011060.1"/>
</dbReference>
<dbReference type="SMR" id="B4SC79"/>
<dbReference type="STRING" id="324925.Ppha_0326"/>
<dbReference type="KEGG" id="pph:Ppha_0326"/>
<dbReference type="eggNOG" id="COG1348">
    <property type="taxonomic scope" value="Bacteria"/>
</dbReference>
<dbReference type="HOGENOM" id="CLU_059373_2_0_10"/>
<dbReference type="OrthoDB" id="9778641at2"/>
<dbReference type="UniPathway" id="UPA00671"/>
<dbReference type="Proteomes" id="UP000002724">
    <property type="component" value="Chromosome"/>
</dbReference>
<dbReference type="GO" id="GO:0051539">
    <property type="term" value="F:4 iron, 4 sulfur cluster binding"/>
    <property type="evidence" value="ECO:0007669"/>
    <property type="project" value="UniProtKB-UniRule"/>
</dbReference>
<dbReference type="GO" id="GO:0005524">
    <property type="term" value="F:ATP binding"/>
    <property type="evidence" value="ECO:0007669"/>
    <property type="project" value="UniProtKB-UniRule"/>
</dbReference>
<dbReference type="GO" id="GO:0046872">
    <property type="term" value="F:metal ion binding"/>
    <property type="evidence" value="ECO:0007669"/>
    <property type="project" value="UniProtKB-KW"/>
</dbReference>
<dbReference type="GO" id="GO:0016730">
    <property type="term" value="F:oxidoreductase activity, acting on iron-sulfur proteins as donors"/>
    <property type="evidence" value="ECO:0007669"/>
    <property type="project" value="InterPro"/>
</dbReference>
<dbReference type="GO" id="GO:0016636">
    <property type="term" value="F:oxidoreductase activity, acting on the CH-CH group of donors, iron-sulfur protein as acceptor"/>
    <property type="evidence" value="ECO:0007669"/>
    <property type="project" value="UniProtKB-UniRule"/>
</dbReference>
<dbReference type="GO" id="GO:0036070">
    <property type="term" value="P:light-independent bacteriochlorophyll biosynthetic process"/>
    <property type="evidence" value="ECO:0007669"/>
    <property type="project" value="UniProtKB-UniRule"/>
</dbReference>
<dbReference type="GO" id="GO:0019685">
    <property type="term" value="P:photosynthesis, dark reaction"/>
    <property type="evidence" value="ECO:0007669"/>
    <property type="project" value="InterPro"/>
</dbReference>
<dbReference type="Gene3D" id="3.40.50.300">
    <property type="entry name" value="P-loop containing nucleotide triphosphate hydrolases"/>
    <property type="match status" value="1"/>
</dbReference>
<dbReference type="HAMAP" id="MF_00355">
    <property type="entry name" value="ChlL_BchL"/>
    <property type="match status" value="1"/>
</dbReference>
<dbReference type="InterPro" id="IPR030655">
    <property type="entry name" value="NifH/chlL_CS"/>
</dbReference>
<dbReference type="InterPro" id="IPR000392">
    <property type="entry name" value="NifH/frxC"/>
</dbReference>
<dbReference type="InterPro" id="IPR027417">
    <property type="entry name" value="P-loop_NTPase"/>
</dbReference>
<dbReference type="InterPro" id="IPR005971">
    <property type="entry name" value="Protochlorophyllide_ATP-bd"/>
</dbReference>
<dbReference type="NCBIfam" id="TIGR01281">
    <property type="entry name" value="DPOR_bchL"/>
    <property type="match status" value="1"/>
</dbReference>
<dbReference type="PANTHER" id="PTHR42864">
    <property type="entry name" value="LIGHT-INDEPENDENT PROTOCHLOROPHYLLIDE REDUCTASE IRON-SULFUR ATP-BINDING PROTEIN"/>
    <property type="match status" value="1"/>
</dbReference>
<dbReference type="PANTHER" id="PTHR42864:SF2">
    <property type="entry name" value="LIGHT-INDEPENDENT PROTOCHLOROPHYLLIDE REDUCTASE IRON-SULFUR ATP-BINDING PROTEIN"/>
    <property type="match status" value="1"/>
</dbReference>
<dbReference type="Pfam" id="PF00142">
    <property type="entry name" value="Fer4_NifH"/>
    <property type="match status" value="1"/>
</dbReference>
<dbReference type="PIRSF" id="PIRSF000363">
    <property type="entry name" value="Nitrogenase_iron"/>
    <property type="match status" value="1"/>
</dbReference>
<dbReference type="PRINTS" id="PR00091">
    <property type="entry name" value="NITROGNASEII"/>
</dbReference>
<dbReference type="SUPFAM" id="SSF52540">
    <property type="entry name" value="P-loop containing nucleoside triphosphate hydrolases"/>
    <property type="match status" value="1"/>
</dbReference>
<dbReference type="PROSITE" id="PS00746">
    <property type="entry name" value="NIFH_FRXC_1"/>
    <property type="match status" value="1"/>
</dbReference>
<dbReference type="PROSITE" id="PS00692">
    <property type="entry name" value="NIFH_FRXC_2"/>
    <property type="match status" value="1"/>
</dbReference>
<dbReference type="PROSITE" id="PS51026">
    <property type="entry name" value="NIFH_FRXC_3"/>
    <property type="match status" value="1"/>
</dbReference>
<comment type="function">
    <text evidence="1">Component of the dark-operative protochlorophyllide reductase (DPOR) that uses Mg-ATP and reduced ferredoxin to reduce ring D of protochlorophyllide (Pchlide) to form chlorophyllide a (Chlide). This reaction is light-independent. The L component serves as a unique electron donor to the NB-component of the complex, and binds Mg-ATP.</text>
</comment>
<comment type="catalytic activity">
    <reaction evidence="1">
        <text>chlorophyllide a + oxidized 2[4Fe-4S]-[ferredoxin] + 2 ADP + 2 phosphate = protochlorophyllide a + reduced 2[4Fe-4S]-[ferredoxin] + 2 ATP + 2 H2O</text>
        <dbReference type="Rhea" id="RHEA:28202"/>
        <dbReference type="Rhea" id="RHEA-COMP:10002"/>
        <dbReference type="Rhea" id="RHEA-COMP:10004"/>
        <dbReference type="ChEBI" id="CHEBI:15377"/>
        <dbReference type="ChEBI" id="CHEBI:30616"/>
        <dbReference type="ChEBI" id="CHEBI:33722"/>
        <dbReference type="ChEBI" id="CHEBI:33723"/>
        <dbReference type="ChEBI" id="CHEBI:43474"/>
        <dbReference type="ChEBI" id="CHEBI:83348"/>
        <dbReference type="ChEBI" id="CHEBI:83350"/>
        <dbReference type="ChEBI" id="CHEBI:456216"/>
        <dbReference type="EC" id="1.3.7.7"/>
    </reaction>
</comment>
<comment type="cofactor">
    <cofactor evidence="1">
        <name>[4Fe-4S] cluster</name>
        <dbReference type="ChEBI" id="CHEBI:49883"/>
    </cofactor>
    <text evidence="1">Binds 1 [4Fe-4S] cluster per dimer.</text>
</comment>
<comment type="pathway">
    <text evidence="1">Porphyrin-containing compound metabolism; bacteriochlorophyll biosynthesis (light-independent).</text>
</comment>
<comment type="subunit">
    <text evidence="1">Homodimer. Protochlorophyllide reductase is composed of three subunits; BchL, BchN and BchB.</text>
</comment>
<comment type="similarity">
    <text evidence="1">Belongs to the NifH/BchL/ChlL family.</text>
</comment>
<feature type="chain" id="PRO_1000120558" description="Light-independent protochlorophyllide reductase iron-sulfur ATP-binding protein">
    <location>
        <begin position="1"/>
        <end position="275"/>
    </location>
</feature>
<feature type="binding site" evidence="1">
    <location>
        <begin position="12"/>
        <end position="17"/>
    </location>
    <ligand>
        <name>ATP</name>
        <dbReference type="ChEBI" id="CHEBI:30616"/>
    </ligand>
</feature>
<feature type="binding site" evidence="1">
    <location>
        <position position="16"/>
    </location>
    <ligand>
        <name>Mg(2+)</name>
        <dbReference type="ChEBI" id="CHEBI:18420"/>
    </ligand>
</feature>
<feature type="binding site" evidence="1">
    <location>
        <position position="41"/>
    </location>
    <ligand>
        <name>ATP</name>
        <dbReference type="ChEBI" id="CHEBI:30616"/>
    </ligand>
</feature>
<feature type="binding site" evidence="1">
    <location>
        <position position="97"/>
    </location>
    <ligand>
        <name>[4Fe-4S] cluster</name>
        <dbReference type="ChEBI" id="CHEBI:49883"/>
        <note>ligand shared between dimeric partners</note>
    </ligand>
</feature>
<feature type="binding site" evidence="1">
    <location>
        <position position="131"/>
    </location>
    <ligand>
        <name>[4Fe-4S] cluster</name>
        <dbReference type="ChEBI" id="CHEBI:49883"/>
        <note>ligand shared between dimeric partners</note>
    </ligand>
</feature>
<feature type="binding site" evidence="1">
    <location>
        <begin position="182"/>
        <end position="183"/>
    </location>
    <ligand>
        <name>ATP</name>
        <dbReference type="ChEBI" id="CHEBI:30616"/>
    </ligand>
</feature>
<evidence type="ECO:0000255" key="1">
    <source>
        <dbReference type="HAMAP-Rule" id="MF_00355"/>
    </source>
</evidence>